<feature type="chain" id="PRO_0000403135" description="Putative phycoerythrobilin lyase CpeS">
    <location>
        <begin position="1"/>
        <end position="221"/>
    </location>
</feature>
<proteinExistence type="evidence at transcript level"/>
<comment type="function">
    <text evidence="1">Covalently attaches a chromophore, probably phycoerythrobilin, to Cys residue(s) of phycobiliproteins.</text>
</comment>
<comment type="induction">
    <text evidence="2">Induced under green light, it is part of the cpeESTR operon.</text>
</comment>
<comment type="similarity">
    <text evidence="3">Belongs to the CpcS/CpeS biliprotein lyase family.</text>
</comment>
<sequence>METKVLMNITKFVANSIGHWRSQRSAHHLAFGHFEAVQSEIDIIALPHDDPAVIDLCKSYNIDPQTVVSPFRMTWEGQSDWDDSEIKGTCVLVPIPDPDSPHRGKLLRSRLCRNNRCRGDYYFTEHGTFVLVTAYERAAAEEKIWFVNPNVRCLCVSLIKTSVRFSELLLPHFLQKFARIFRIKLYMTIFKSYRYKLRACSLYINAIALALPCHFFINTGA</sequence>
<evidence type="ECO:0000250" key="1"/>
<evidence type="ECO:0000269" key="2">
    <source>
    </source>
</evidence>
<evidence type="ECO:0000305" key="3"/>
<dbReference type="EC" id="4.-.-.-"/>
<dbReference type="EMBL" id="AF334109">
    <property type="protein sequence ID" value="AAK11647.1"/>
    <property type="molecule type" value="Genomic_DNA"/>
</dbReference>
<dbReference type="SMR" id="Q9ALZ8"/>
<dbReference type="BRENDA" id="4.4.1.29">
    <property type="organism ID" value="2328"/>
</dbReference>
<dbReference type="BRENDA" id="4.4.1.30">
    <property type="organism ID" value="2328"/>
</dbReference>
<dbReference type="GO" id="GO:0016829">
    <property type="term" value="F:lyase activity"/>
    <property type="evidence" value="ECO:0007669"/>
    <property type="project" value="UniProtKB-KW"/>
</dbReference>
<dbReference type="CDD" id="cd19433">
    <property type="entry name" value="lipocalin_CpcS-CpeS"/>
    <property type="match status" value="1"/>
</dbReference>
<dbReference type="Gene3D" id="2.40.128.20">
    <property type="match status" value="1"/>
</dbReference>
<dbReference type="HAMAP" id="MF_01459">
    <property type="entry name" value="Chrphore_lyase_CpxS"/>
    <property type="match status" value="1"/>
</dbReference>
<dbReference type="InterPro" id="IPR012674">
    <property type="entry name" value="Calycin"/>
</dbReference>
<dbReference type="InterPro" id="IPR018536">
    <property type="entry name" value="CpcS/CpeS"/>
</dbReference>
<dbReference type="Pfam" id="PF09367">
    <property type="entry name" value="CpeS"/>
    <property type="match status" value="1"/>
</dbReference>
<organism>
    <name type="scientific">Microchaete diplosiphon</name>
    <name type="common">Fremyella diplosiphon</name>
    <dbReference type="NCBI Taxonomy" id="1197"/>
    <lineage>
        <taxon>Bacteria</taxon>
        <taxon>Bacillati</taxon>
        <taxon>Cyanobacteriota</taxon>
        <taxon>Cyanophyceae</taxon>
        <taxon>Nostocales</taxon>
        <taxon>Rivulariaceae</taxon>
        <taxon>Microchaete</taxon>
    </lineage>
</organism>
<protein>
    <recommendedName>
        <fullName>Putative phycoerythrobilin lyase CpeS</fullName>
        <ecNumber>4.-.-.-</ecNumber>
    </recommendedName>
</protein>
<accession>Q9ALZ8</accession>
<gene>
    <name type="primary">cpeS</name>
</gene>
<reference key="1">
    <citation type="journal article" date="2002" name="Mol. Microbiol.">
        <title>CpeR is an activator required for expression of the phycoerythrin operon (cpeBA) in the cyanobacterium Fremyella diplosiphon and is encoded in the phycoerythrin linker-polypeptide operon (cpeCDESTR).</title>
        <authorList>
            <person name="Cobley J.G."/>
            <person name="Clark A.C."/>
            <person name="Weerasurya S."/>
            <person name="Queseda F.A."/>
            <person name="Xiao J.Y."/>
            <person name="Bandrapali N."/>
            <person name="D'Silva I."/>
            <person name="Thounaojam M."/>
            <person name="Oda J.F."/>
            <person name="Sumiyoshi T."/>
            <person name="Chu M.H."/>
        </authorList>
    </citation>
    <scope>NUCLEOTIDE SEQUENCE [GENOMIC DNA]</scope>
    <scope>INDUCTION</scope>
    <scope>OPERON STRUCTURE</scope>
    <source>
        <strain>UTEX 481 / PCC 7601 / SAG 1410-2</strain>
    </source>
</reference>
<keyword id="KW-0456">Lyase</keyword>
<name>CPES_MICDP</name>